<keyword id="KW-0067">ATP-binding</keyword>
<keyword id="KW-0963">Cytoplasm</keyword>
<keyword id="KW-0315">Glutamine amidotransferase</keyword>
<keyword id="KW-0436">Ligase</keyword>
<keyword id="KW-0460">Magnesium</keyword>
<keyword id="KW-0479">Metal-binding</keyword>
<keyword id="KW-0547">Nucleotide-binding</keyword>
<keyword id="KW-0658">Purine biosynthesis</keyword>
<accession>Q1CKD2</accession>
<accession>C4GRG3</accession>
<feature type="chain" id="PRO_0000264603" description="Phosphoribosylformylglycinamidine synthase">
    <location>
        <begin position="1"/>
        <end position="1296"/>
    </location>
</feature>
<feature type="domain" description="Glutamine amidotransferase type-1" evidence="1">
    <location>
        <begin position="1043"/>
        <end position="1296"/>
    </location>
</feature>
<feature type="region of interest" description="Disordered" evidence="2">
    <location>
        <begin position="304"/>
        <end position="323"/>
    </location>
</feature>
<feature type="region of interest" description="Disordered" evidence="2">
    <location>
        <begin position="1000"/>
        <end position="1019"/>
    </location>
</feature>
<feature type="compositionally biased region" description="Basic and acidic residues" evidence="2">
    <location>
        <begin position="1000"/>
        <end position="1013"/>
    </location>
</feature>
<feature type="active site" description="Nucleophile" evidence="1">
    <location>
        <position position="1136"/>
    </location>
</feature>
<feature type="active site" evidence="1">
    <location>
        <position position="1261"/>
    </location>
</feature>
<feature type="active site" evidence="1">
    <location>
        <position position="1263"/>
    </location>
</feature>
<feature type="binding site" evidence="1">
    <location>
        <begin position="306"/>
        <end position="317"/>
    </location>
    <ligand>
        <name>ATP</name>
        <dbReference type="ChEBI" id="CHEBI:30616"/>
    </ligand>
</feature>
<feature type="binding site" evidence="1">
    <location>
        <position position="677"/>
    </location>
    <ligand>
        <name>ATP</name>
        <dbReference type="ChEBI" id="CHEBI:30616"/>
    </ligand>
</feature>
<feature type="binding site" evidence="1">
    <location>
        <position position="678"/>
    </location>
    <ligand>
        <name>Mg(2+)</name>
        <dbReference type="ChEBI" id="CHEBI:18420"/>
    </ligand>
</feature>
<feature type="binding site" evidence="1">
    <location>
        <position position="717"/>
    </location>
    <ligand>
        <name>Mg(2+)</name>
        <dbReference type="ChEBI" id="CHEBI:18420"/>
    </ligand>
</feature>
<feature type="binding site" evidence="1">
    <location>
        <position position="721"/>
    </location>
    <ligand>
        <name>Mg(2+)</name>
        <dbReference type="ChEBI" id="CHEBI:18420"/>
    </ligand>
</feature>
<feature type="binding site" evidence="1">
    <location>
        <position position="885"/>
    </location>
    <ligand>
        <name>Mg(2+)</name>
        <dbReference type="ChEBI" id="CHEBI:18420"/>
    </ligand>
</feature>
<feature type="binding site" evidence="1">
    <location>
        <position position="887"/>
    </location>
    <ligand>
        <name>ATP</name>
        <dbReference type="ChEBI" id="CHEBI:30616"/>
    </ligand>
</feature>
<gene>
    <name evidence="1" type="primary">purL</name>
    <name type="ordered locus">YPN_1218</name>
    <name type="ORF">YP516_1332</name>
</gene>
<name>PUR4_YERPN</name>
<sequence length="1296" mass="142032">MEILRGSPALSAFRITKLLSRCQDAHLPVSDIYAEYVHFADVSAPLSADEHARLQRLLQYGPSLPEHPPAGRLLLVTPRPGTISPWSSKATDIAHNCGLSQILRLERGLAFSIQGPDLNESQWKQLAALLHDRMMEAVFTDLQQAEQLFSHHQPAPVQRVDILGQGRSALEQANIKLGLALAQDEIDYLLTAFTGLGRNPTDIELYMFAQANSEHCRHKIFNADWVIDGVVQPKTLFKMIKNTFEHTPDYVLSAYKDNAAVMEGSQVGRFYATAEKGIYDYHQEEAHILMKVETHNHPTAISPWPGAATGSGGEIRDEGATGRGAKPKAGLVGFSVSNLRIPGFEQPWEENFGKPDRIVTALDIMTEGPLGGAAFNNEFGRPALLGYFRTYEERVNSHNGIELRGYHKPIMLAGGLGNIRADHVQKGEITVGAKLVVLGGPSMNIGLGGGAASSMASGQSDADLDFASVQRDNPEMERRCQEVIDRCWQLGEYNPILFIHDVGAGGLSNAMPELVNDGGRGGRFELRDILNDEPGMSPLEVWCNESQERYVLAVAPAQMALFDEICRRERAPYAVIGEATEEKHLLLNDRHFGNQPIDMPLDVLLGKTPKMLRDVTRLQAKGDALQRADISLAEAVKRIMHLPAVAEKTFLITIGDRTVTGMVTRDQMVGPWQIPVADCAVTSASLDSYYGEAMSLGERAPVALLDFAASARLAVGEALTNIAATQIGELKRIKLSANWMSAAGHPGEDAGLYDAVRAVGEELCPALEITIPVGKDSMSMKTRWQEGHEQREMTSPLSLVITAFARIEDVRRTVTPQLRTDKGDNALLLIDLGAGHNALGATALTQVYRQLGDKPADVRNVQQLAGFFNAMQRLVADQHLLAYHDRSDGGLLVTLAEMAFAGHCGVTVDIQSLGNDALAALFNEELGAVIQVRAEQRADVEKLLADHGLANCVHYLGRAVAGDTFDIRSGTDVVYSEKRSTLRLWWAETSWQMQRLRDNPDCADQEHQAKQDESDPGLNVKLTFDPAEDIAAPFILKQARPKVAVLREQGVNSHVEMAAAFHRAGFDAVDVHMSDLLAGRTDLQSFQTLVACGGFSYGDVLGAGEGWAKSILFNDRVRDEFEAFFHRPTTLALGVCNGCQMMSNLRELIPGAEHWPRFVRNLSDSFEARFSLVEVASSPSLFMQDMVGSRMPIAVSHGEGQVEVRDAAHLAALEQSHLVALRFVNNHGVVTEQYPANPNGSANGITAVTSVSGRATVMMPHPERVFRTVSNSWHPEEWGEDSPWMRMFRNARKQLG</sequence>
<reference key="1">
    <citation type="journal article" date="2006" name="J. Bacteriol.">
        <title>Complete genome sequence of Yersinia pestis strains Antiqua and Nepal516: evidence of gene reduction in an emerging pathogen.</title>
        <authorList>
            <person name="Chain P.S.G."/>
            <person name="Hu P."/>
            <person name="Malfatti S.A."/>
            <person name="Radnedge L."/>
            <person name="Larimer F."/>
            <person name="Vergez L.M."/>
            <person name="Worsham P."/>
            <person name="Chu M.C."/>
            <person name="Andersen G.L."/>
        </authorList>
    </citation>
    <scope>NUCLEOTIDE SEQUENCE [LARGE SCALE GENOMIC DNA]</scope>
    <source>
        <strain>Nepal516</strain>
    </source>
</reference>
<reference key="2">
    <citation type="submission" date="2009-04" db="EMBL/GenBank/DDBJ databases">
        <title>Yersinia pestis Nepal516A whole genome shotgun sequencing project.</title>
        <authorList>
            <person name="Plunkett G. III"/>
            <person name="Anderson B.D."/>
            <person name="Baumler D.J."/>
            <person name="Burland V."/>
            <person name="Cabot E.L."/>
            <person name="Glasner J.D."/>
            <person name="Mau B."/>
            <person name="Neeno-Eckwall E."/>
            <person name="Perna N.T."/>
            <person name="Munk A.C."/>
            <person name="Tapia R."/>
            <person name="Green L.D."/>
            <person name="Rogers Y.C."/>
            <person name="Detter J.C."/>
            <person name="Bruce D.C."/>
            <person name="Brettin T.S."/>
        </authorList>
    </citation>
    <scope>NUCLEOTIDE SEQUENCE [LARGE SCALE GENOMIC DNA]</scope>
    <source>
        <strain>Nepal516</strain>
    </source>
</reference>
<protein>
    <recommendedName>
        <fullName evidence="1">Phosphoribosylformylglycinamidine synthase</fullName>
        <shortName evidence="1">FGAM synthase</shortName>
        <shortName evidence="1">FGAMS</shortName>
        <ecNumber evidence="1">6.3.5.3</ecNumber>
    </recommendedName>
    <alternativeName>
        <fullName evidence="1">Formylglycinamide ribonucleotide amidotransferase</fullName>
        <shortName evidence="1">FGAR amidotransferase</shortName>
        <shortName evidence="1">FGAR-AT</shortName>
    </alternativeName>
</protein>
<evidence type="ECO:0000255" key="1">
    <source>
        <dbReference type="HAMAP-Rule" id="MF_00419"/>
    </source>
</evidence>
<evidence type="ECO:0000256" key="2">
    <source>
        <dbReference type="SAM" id="MobiDB-lite"/>
    </source>
</evidence>
<evidence type="ECO:0000305" key="3"/>
<organism>
    <name type="scientific">Yersinia pestis bv. Antiqua (strain Nepal516)</name>
    <dbReference type="NCBI Taxonomy" id="377628"/>
    <lineage>
        <taxon>Bacteria</taxon>
        <taxon>Pseudomonadati</taxon>
        <taxon>Pseudomonadota</taxon>
        <taxon>Gammaproteobacteria</taxon>
        <taxon>Enterobacterales</taxon>
        <taxon>Yersiniaceae</taxon>
        <taxon>Yersinia</taxon>
    </lineage>
</organism>
<comment type="function">
    <text evidence="1">Phosphoribosylformylglycinamidine synthase involved in the purines biosynthetic pathway. Catalyzes the ATP-dependent conversion of formylglycinamide ribonucleotide (FGAR) and glutamine to yield formylglycinamidine ribonucleotide (FGAM) and glutamate.</text>
</comment>
<comment type="catalytic activity">
    <reaction evidence="1">
        <text>N(2)-formyl-N(1)-(5-phospho-beta-D-ribosyl)glycinamide + L-glutamine + ATP + H2O = 2-formamido-N(1)-(5-O-phospho-beta-D-ribosyl)acetamidine + L-glutamate + ADP + phosphate + H(+)</text>
        <dbReference type="Rhea" id="RHEA:17129"/>
        <dbReference type="ChEBI" id="CHEBI:15377"/>
        <dbReference type="ChEBI" id="CHEBI:15378"/>
        <dbReference type="ChEBI" id="CHEBI:29985"/>
        <dbReference type="ChEBI" id="CHEBI:30616"/>
        <dbReference type="ChEBI" id="CHEBI:43474"/>
        <dbReference type="ChEBI" id="CHEBI:58359"/>
        <dbReference type="ChEBI" id="CHEBI:147286"/>
        <dbReference type="ChEBI" id="CHEBI:147287"/>
        <dbReference type="ChEBI" id="CHEBI:456216"/>
        <dbReference type="EC" id="6.3.5.3"/>
    </reaction>
</comment>
<comment type="pathway">
    <text evidence="1">Purine metabolism; IMP biosynthesis via de novo pathway; 5-amino-1-(5-phospho-D-ribosyl)imidazole from N(2)-formyl-N(1)-(5-phospho-D-ribosyl)glycinamide: step 1/2.</text>
</comment>
<comment type="subunit">
    <text evidence="1">Monomer.</text>
</comment>
<comment type="subcellular location">
    <subcellularLocation>
        <location evidence="1">Cytoplasm</location>
    </subcellularLocation>
</comment>
<comment type="similarity">
    <text evidence="1">In the N-terminal section; belongs to the FGAMS family.</text>
</comment>
<comment type="sequence caution" evidence="3">
    <conflict type="erroneous initiation">
        <sequence resource="EMBL-CDS" id="ABG17548"/>
    </conflict>
    <text>Truncated N-terminus.</text>
</comment>
<proteinExistence type="inferred from homology"/>
<dbReference type="EC" id="6.3.5.3" evidence="1"/>
<dbReference type="EMBL" id="CP000305">
    <property type="protein sequence ID" value="ABG17548.1"/>
    <property type="status" value="ALT_INIT"/>
    <property type="molecule type" value="Genomic_DNA"/>
</dbReference>
<dbReference type="EMBL" id="ACNQ01000008">
    <property type="protein sequence ID" value="EEO77654.1"/>
    <property type="molecule type" value="Genomic_DNA"/>
</dbReference>
<dbReference type="RefSeq" id="WP_002223376.1">
    <property type="nucleotide sequence ID" value="NZ_ACNQ01000008.1"/>
</dbReference>
<dbReference type="SMR" id="Q1CKD2"/>
<dbReference type="KEGG" id="ypn:YPN_1218"/>
<dbReference type="HOGENOM" id="CLU_001031_0_2_6"/>
<dbReference type="UniPathway" id="UPA00074">
    <property type="reaction ID" value="UER00128"/>
</dbReference>
<dbReference type="Proteomes" id="UP000008936">
    <property type="component" value="Chromosome"/>
</dbReference>
<dbReference type="GO" id="GO:0005737">
    <property type="term" value="C:cytoplasm"/>
    <property type="evidence" value="ECO:0007669"/>
    <property type="project" value="UniProtKB-SubCell"/>
</dbReference>
<dbReference type="GO" id="GO:0005524">
    <property type="term" value="F:ATP binding"/>
    <property type="evidence" value="ECO:0007669"/>
    <property type="project" value="UniProtKB-UniRule"/>
</dbReference>
<dbReference type="GO" id="GO:0046872">
    <property type="term" value="F:metal ion binding"/>
    <property type="evidence" value="ECO:0007669"/>
    <property type="project" value="UniProtKB-KW"/>
</dbReference>
<dbReference type="GO" id="GO:0004642">
    <property type="term" value="F:phosphoribosylformylglycinamidine synthase activity"/>
    <property type="evidence" value="ECO:0007669"/>
    <property type="project" value="UniProtKB-UniRule"/>
</dbReference>
<dbReference type="GO" id="GO:0006189">
    <property type="term" value="P:'de novo' IMP biosynthetic process"/>
    <property type="evidence" value="ECO:0007669"/>
    <property type="project" value="UniProtKB-UniRule"/>
</dbReference>
<dbReference type="CDD" id="cd01740">
    <property type="entry name" value="GATase1_FGAR_AT"/>
    <property type="match status" value="1"/>
</dbReference>
<dbReference type="CDD" id="cd02203">
    <property type="entry name" value="PurL_repeat1"/>
    <property type="match status" value="1"/>
</dbReference>
<dbReference type="FunFam" id="1.10.8.750:FF:000002">
    <property type="entry name" value="Phosphoribosylformylglycinamidine synthase"/>
    <property type="match status" value="1"/>
</dbReference>
<dbReference type="FunFam" id="3.30.1330.10:FF:000002">
    <property type="entry name" value="Phosphoribosylformylglycinamidine synthase"/>
    <property type="match status" value="1"/>
</dbReference>
<dbReference type="FunFam" id="3.30.1330.10:FF:000005">
    <property type="entry name" value="Phosphoribosylformylglycinamidine synthase"/>
    <property type="match status" value="1"/>
</dbReference>
<dbReference type="FunFam" id="3.40.50.880:FF:000008">
    <property type="entry name" value="Phosphoribosylformylglycinamidine synthase"/>
    <property type="match status" value="1"/>
</dbReference>
<dbReference type="FunFam" id="3.90.650.10:FF:000002">
    <property type="entry name" value="Phosphoribosylformylglycinamidine synthase"/>
    <property type="match status" value="1"/>
</dbReference>
<dbReference type="FunFam" id="3.90.650.10:FF:000005">
    <property type="entry name" value="Phosphoribosylformylglycinamidine synthase"/>
    <property type="match status" value="1"/>
</dbReference>
<dbReference type="Gene3D" id="3.40.50.880">
    <property type="match status" value="1"/>
</dbReference>
<dbReference type="Gene3D" id="1.10.8.750">
    <property type="entry name" value="Phosphoribosylformylglycinamidine synthase, linker domain"/>
    <property type="match status" value="1"/>
</dbReference>
<dbReference type="Gene3D" id="3.90.650.10">
    <property type="entry name" value="PurM-like C-terminal domain"/>
    <property type="match status" value="2"/>
</dbReference>
<dbReference type="Gene3D" id="3.30.1330.10">
    <property type="entry name" value="PurM-like, N-terminal domain"/>
    <property type="match status" value="2"/>
</dbReference>
<dbReference type="HAMAP" id="MF_00419">
    <property type="entry name" value="PurL_1"/>
    <property type="match status" value="1"/>
</dbReference>
<dbReference type="InterPro" id="IPR029062">
    <property type="entry name" value="Class_I_gatase-like"/>
</dbReference>
<dbReference type="InterPro" id="IPR040707">
    <property type="entry name" value="FGAR-AT_N"/>
</dbReference>
<dbReference type="InterPro" id="IPR055181">
    <property type="entry name" value="FGAR-AT_PurM_N-like"/>
</dbReference>
<dbReference type="InterPro" id="IPR010073">
    <property type="entry name" value="PurL_large"/>
</dbReference>
<dbReference type="InterPro" id="IPR041609">
    <property type="entry name" value="PurL_linker"/>
</dbReference>
<dbReference type="InterPro" id="IPR010918">
    <property type="entry name" value="PurM-like_C_dom"/>
</dbReference>
<dbReference type="InterPro" id="IPR036676">
    <property type="entry name" value="PurM-like_C_sf"/>
</dbReference>
<dbReference type="InterPro" id="IPR036921">
    <property type="entry name" value="PurM-like_N_sf"/>
</dbReference>
<dbReference type="InterPro" id="IPR036604">
    <property type="entry name" value="PurS-like_sf"/>
</dbReference>
<dbReference type="NCBIfam" id="TIGR01735">
    <property type="entry name" value="FGAM_synt"/>
    <property type="match status" value="1"/>
</dbReference>
<dbReference type="NCBIfam" id="NF003672">
    <property type="entry name" value="PRK05297.1"/>
    <property type="match status" value="1"/>
</dbReference>
<dbReference type="PANTHER" id="PTHR10099">
    <property type="entry name" value="PHOSPHORIBOSYLFORMYLGLYCINAMIDINE SYNTHASE"/>
    <property type="match status" value="1"/>
</dbReference>
<dbReference type="PANTHER" id="PTHR10099:SF1">
    <property type="entry name" value="PHOSPHORIBOSYLFORMYLGLYCINAMIDINE SYNTHASE"/>
    <property type="match status" value="1"/>
</dbReference>
<dbReference type="Pfam" id="PF02769">
    <property type="entry name" value="AIRS_C"/>
    <property type="match status" value="2"/>
</dbReference>
<dbReference type="Pfam" id="PF18072">
    <property type="entry name" value="FGAR-AT_linker"/>
    <property type="match status" value="1"/>
</dbReference>
<dbReference type="Pfam" id="PF18076">
    <property type="entry name" value="FGAR-AT_N"/>
    <property type="match status" value="1"/>
</dbReference>
<dbReference type="Pfam" id="PF22689">
    <property type="entry name" value="FGAR-AT_PurM_N-like"/>
    <property type="match status" value="1"/>
</dbReference>
<dbReference type="Pfam" id="PF13507">
    <property type="entry name" value="GATase_5"/>
    <property type="match status" value="1"/>
</dbReference>
<dbReference type="SMART" id="SM01211">
    <property type="entry name" value="GATase_5"/>
    <property type="match status" value="1"/>
</dbReference>
<dbReference type="SUPFAM" id="SSF52317">
    <property type="entry name" value="Class I glutamine amidotransferase-like"/>
    <property type="match status" value="1"/>
</dbReference>
<dbReference type="SUPFAM" id="SSF109736">
    <property type="entry name" value="FGAM synthase PurL, linker domain"/>
    <property type="match status" value="1"/>
</dbReference>
<dbReference type="SUPFAM" id="SSF56042">
    <property type="entry name" value="PurM C-terminal domain-like"/>
    <property type="match status" value="2"/>
</dbReference>
<dbReference type="SUPFAM" id="SSF55326">
    <property type="entry name" value="PurM N-terminal domain-like"/>
    <property type="match status" value="2"/>
</dbReference>
<dbReference type="SUPFAM" id="SSF82697">
    <property type="entry name" value="PurS-like"/>
    <property type="match status" value="1"/>
</dbReference>
<dbReference type="PROSITE" id="PS51273">
    <property type="entry name" value="GATASE_TYPE_1"/>
    <property type="match status" value="1"/>
</dbReference>